<keyword id="KW-0963">Cytoplasm</keyword>
<keyword id="KW-1185">Reference proteome</keyword>
<keyword id="KW-0690">Ribosome biogenesis</keyword>
<proteinExistence type="inferred from homology"/>
<feature type="chain" id="PRO_1000201645" description="Ribosome-binding factor A">
    <location>
        <begin position="1"/>
        <end position="148"/>
    </location>
</feature>
<feature type="region of interest" description="Disordered" evidence="2">
    <location>
        <begin position="120"/>
        <end position="148"/>
    </location>
</feature>
<feature type="compositionally biased region" description="Basic and acidic residues" evidence="2">
    <location>
        <begin position="133"/>
        <end position="148"/>
    </location>
</feature>
<organism>
    <name type="scientific">Micrococcus luteus (strain ATCC 4698 / DSM 20030 / JCM 1464 / CCM 169 / CCUG 5858 / IAM 1056 / NBRC 3333 / NCIMB 9278 / NCTC 2665 / VKM Ac-2230)</name>
    <name type="common">Micrococcus lysodeikticus</name>
    <dbReference type="NCBI Taxonomy" id="465515"/>
    <lineage>
        <taxon>Bacteria</taxon>
        <taxon>Bacillati</taxon>
        <taxon>Actinomycetota</taxon>
        <taxon>Actinomycetes</taxon>
        <taxon>Micrococcales</taxon>
        <taxon>Micrococcaceae</taxon>
        <taxon>Micrococcus</taxon>
    </lineage>
</organism>
<accession>C5C9T2</accession>
<sequence length="148" mass="16038">MADPARAGRLAQRIKVLVAEALRRGVKDDRVEPVTVTEVRVTNDLQHATVYYTVLGDEATVAAAHEGIQDNRGILRREVGRGLTIRLVPTLEFVADTVPEAAAHLEDVLRAAKERDAELAKAREGASYAGDADPYRTAEPDADDAPRA</sequence>
<evidence type="ECO:0000255" key="1">
    <source>
        <dbReference type="HAMAP-Rule" id="MF_00003"/>
    </source>
</evidence>
<evidence type="ECO:0000256" key="2">
    <source>
        <dbReference type="SAM" id="MobiDB-lite"/>
    </source>
</evidence>
<dbReference type="EMBL" id="CP001628">
    <property type="protein sequence ID" value="ACS30234.1"/>
    <property type="molecule type" value="Genomic_DNA"/>
</dbReference>
<dbReference type="RefSeq" id="WP_010079129.1">
    <property type="nucleotide sequence ID" value="NC_012803.1"/>
</dbReference>
<dbReference type="SMR" id="C5C9T2"/>
<dbReference type="STRING" id="465515.Mlut_07020"/>
<dbReference type="EnsemblBacteria" id="ACS30234">
    <property type="protein sequence ID" value="ACS30234"/>
    <property type="gene ID" value="Mlut_07020"/>
</dbReference>
<dbReference type="GeneID" id="93344867"/>
<dbReference type="KEGG" id="mlu:Mlut_07020"/>
<dbReference type="PATRIC" id="fig|465515.4.peg.665"/>
<dbReference type="eggNOG" id="COG0858">
    <property type="taxonomic scope" value="Bacteria"/>
</dbReference>
<dbReference type="HOGENOM" id="CLU_089475_0_0_11"/>
<dbReference type="Proteomes" id="UP000000738">
    <property type="component" value="Chromosome"/>
</dbReference>
<dbReference type="GO" id="GO:0005829">
    <property type="term" value="C:cytosol"/>
    <property type="evidence" value="ECO:0007669"/>
    <property type="project" value="TreeGrafter"/>
</dbReference>
<dbReference type="GO" id="GO:0043024">
    <property type="term" value="F:ribosomal small subunit binding"/>
    <property type="evidence" value="ECO:0007669"/>
    <property type="project" value="TreeGrafter"/>
</dbReference>
<dbReference type="GO" id="GO:0030490">
    <property type="term" value="P:maturation of SSU-rRNA"/>
    <property type="evidence" value="ECO:0007669"/>
    <property type="project" value="UniProtKB-UniRule"/>
</dbReference>
<dbReference type="Gene3D" id="3.30.300.20">
    <property type="match status" value="1"/>
</dbReference>
<dbReference type="HAMAP" id="MF_00003">
    <property type="entry name" value="RbfA"/>
    <property type="match status" value="1"/>
</dbReference>
<dbReference type="InterPro" id="IPR015946">
    <property type="entry name" value="KH_dom-like_a/b"/>
</dbReference>
<dbReference type="InterPro" id="IPR000238">
    <property type="entry name" value="RbfA"/>
</dbReference>
<dbReference type="InterPro" id="IPR023799">
    <property type="entry name" value="RbfA_dom_sf"/>
</dbReference>
<dbReference type="InterPro" id="IPR020053">
    <property type="entry name" value="Ribosome-bd_factorA_CS"/>
</dbReference>
<dbReference type="NCBIfam" id="TIGR00082">
    <property type="entry name" value="rbfA"/>
    <property type="match status" value="1"/>
</dbReference>
<dbReference type="PANTHER" id="PTHR33515">
    <property type="entry name" value="RIBOSOME-BINDING FACTOR A, CHLOROPLASTIC-RELATED"/>
    <property type="match status" value="1"/>
</dbReference>
<dbReference type="PANTHER" id="PTHR33515:SF1">
    <property type="entry name" value="RIBOSOME-BINDING FACTOR A, CHLOROPLASTIC-RELATED"/>
    <property type="match status" value="1"/>
</dbReference>
<dbReference type="Pfam" id="PF02033">
    <property type="entry name" value="RBFA"/>
    <property type="match status" value="1"/>
</dbReference>
<dbReference type="SUPFAM" id="SSF89919">
    <property type="entry name" value="Ribosome-binding factor A, RbfA"/>
    <property type="match status" value="1"/>
</dbReference>
<dbReference type="PROSITE" id="PS01319">
    <property type="entry name" value="RBFA"/>
    <property type="match status" value="1"/>
</dbReference>
<reference key="1">
    <citation type="journal article" date="2010" name="J. Bacteriol.">
        <title>Genome sequence of the Fleming strain of Micrococcus luteus, a simple free-living actinobacterium.</title>
        <authorList>
            <person name="Young M."/>
            <person name="Artsatbanov V."/>
            <person name="Beller H.R."/>
            <person name="Chandra G."/>
            <person name="Chater K.F."/>
            <person name="Dover L.G."/>
            <person name="Goh E.B."/>
            <person name="Kahan T."/>
            <person name="Kaprelyants A.S."/>
            <person name="Kyrpides N."/>
            <person name="Lapidus A."/>
            <person name="Lowry S.R."/>
            <person name="Lykidis A."/>
            <person name="Mahillon J."/>
            <person name="Markowitz V."/>
            <person name="Mavromatis K."/>
            <person name="Mukamolova G.V."/>
            <person name="Oren A."/>
            <person name="Rokem J.S."/>
            <person name="Smith M.C."/>
            <person name="Young D.I."/>
            <person name="Greenblatt C.L."/>
        </authorList>
    </citation>
    <scope>NUCLEOTIDE SEQUENCE [LARGE SCALE GENOMIC DNA]</scope>
    <source>
        <strain>ATCC 4698 / DSM 20030 / JCM 1464 / CCM 169 / CCUG 5858 / IAM 1056 / NBRC 3333 / NCIMB 9278 / NCTC 2665 / VKM Ac-2230</strain>
    </source>
</reference>
<gene>
    <name evidence="1" type="primary">rbfA</name>
    <name type="ordered locus">Mlut_07020</name>
</gene>
<comment type="function">
    <text evidence="1">One of several proteins that assist in the late maturation steps of the functional core of the 30S ribosomal subunit. Associates with free 30S ribosomal subunits (but not with 30S subunits that are part of 70S ribosomes or polysomes). Required for efficient processing of 16S rRNA. May interact with the 5'-terminal helix region of 16S rRNA.</text>
</comment>
<comment type="subunit">
    <text evidence="1">Monomer. Binds 30S ribosomal subunits, but not 50S ribosomal subunits or 70S ribosomes.</text>
</comment>
<comment type="subcellular location">
    <subcellularLocation>
        <location evidence="1">Cytoplasm</location>
    </subcellularLocation>
</comment>
<comment type="similarity">
    <text evidence="1">Belongs to the RbfA family.</text>
</comment>
<name>RBFA_MICLC</name>
<protein>
    <recommendedName>
        <fullName evidence="1">Ribosome-binding factor A</fullName>
    </recommendedName>
</protein>